<feature type="chain" id="PRO_1000001959" description="Glutamate--tRNA ligase">
    <location>
        <begin position="1"/>
        <end position="469"/>
    </location>
</feature>
<feature type="short sequence motif" description="'HIGH' region" evidence="1">
    <location>
        <begin position="9"/>
        <end position="19"/>
    </location>
</feature>
<feature type="short sequence motif" description="'KMSKS' region" evidence="1">
    <location>
        <begin position="236"/>
        <end position="240"/>
    </location>
</feature>
<feature type="binding site" evidence="1">
    <location>
        <position position="98"/>
    </location>
    <ligand>
        <name>Zn(2+)</name>
        <dbReference type="ChEBI" id="CHEBI:29105"/>
    </ligand>
</feature>
<feature type="binding site" evidence="1">
    <location>
        <position position="100"/>
    </location>
    <ligand>
        <name>Zn(2+)</name>
        <dbReference type="ChEBI" id="CHEBI:29105"/>
    </ligand>
</feature>
<feature type="binding site" evidence="1">
    <location>
        <position position="125"/>
    </location>
    <ligand>
        <name>Zn(2+)</name>
        <dbReference type="ChEBI" id="CHEBI:29105"/>
    </ligand>
</feature>
<feature type="binding site" evidence="1">
    <location>
        <position position="127"/>
    </location>
    <ligand>
        <name>Zn(2+)</name>
        <dbReference type="ChEBI" id="CHEBI:29105"/>
    </ligand>
</feature>
<feature type="binding site" evidence="1">
    <location>
        <position position="239"/>
    </location>
    <ligand>
        <name>ATP</name>
        <dbReference type="ChEBI" id="CHEBI:30616"/>
    </ligand>
</feature>
<sequence>MTIKTRFAPSPTGFLHVGGARTALYSWLYARANQGEFVLRIEDTDLERSTPEACAAILEGMEWLGLNWDEGPYYQTKRFDRYNEIIAQMLEQGTAYKCYCSRERIEAMREEQAAKGEQQKYDGCCRDKAPRDTDEPFVVRFKNPTEGSVVFDDHVRGRIEISNELLDDLIIARTDGTPTYNFCVVVDDWDMGITCVVRGEDHINNTPRQINILKALNAPVPEYAHVAMILGDDGAKLSKRHGAVGVMQYRDDGYLPEALLNYLVRLGWSHGDQEVFSIEEMKQYFKLDDINKAASAFNTEKLIWLNQHYMKELAPEYVAKHLEWHMQDQNIDTANGPALAEVVSALAERAKTLKELAASSRYFYEDFAEFDETAAKKHLRGVALEPLQLLQKKFAELSEWNVEAIHQAIEATAAELELGMGKVGMPLRVAVTGAGMSPAVDLTAFLVGKARCEQRISKAIEFVANRINS</sequence>
<protein>
    <recommendedName>
        <fullName evidence="1">Glutamate--tRNA ligase</fullName>
        <ecNumber evidence="1">6.1.1.17</ecNumber>
    </recommendedName>
    <alternativeName>
        <fullName evidence="1">Glutamyl-tRNA synthetase</fullName>
        <shortName evidence="1">GluRS</shortName>
    </alternativeName>
</protein>
<proteinExistence type="inferred from homology"/>
<accession>A3QCW8</accession>
<comment type="function">
    <text evidence="1">Catalyzes the attachment of glutamate to tRNA(Glu) in a two-step reaction: glutamate is first activated by ATP to form Glu-AMP and then transferred to the acceptor end of tRNA(Glu).</text>
</comment>
<comment type="catalytic activity">
    <reaction evidence="1">
        <text>tRNA(Glu) + L-glutamate + ATP = L-glutamyl-tRNA(Glu) + AMP + diphosphate</text>
        <dbReference type="Rhea" id="RHEA:23540"/>
        <dbReference type="Rhea" id="RHEA-COMP:9663"/>
        <dbReference type="Rhea" id="RHEA-COMP:9680"/>
        <dbReference type="ChEBI" id="CHEBI:29985"/>
        <dbReference type="ChEBI" id="CHEBI:30616"/>
        <dbReference type="ChEBI" id="CHEBI:33019"/>
        <dbReference type="ChEBI" id="CHEBI:78442"/>
        <dbReference type="ChEBI" id="CHEBI:78520"/>
        <dbReference type="ChEBI" id="CHEBI:456215"/>
        <dbReference type="EC" id="6.1.1.17"/>
    </reaction>
</comment>
<comment type="cofactor">
    <cofactor evidence="1">
        <name>Zn(2+)</name>
        <dbReference type="ChEBI" id="CHEBI:29105"/>
    </cofactor>
    <text evidence="1">Binds 1 zinc ion per subunit.</text>
</comment>
<comment type="subunit">
    <text evidence="1">Monomer.</text>
</comment>
<comment type="subcellular location">
    <subcellularLocation>
        <location evidence="1">Cytoplasm</location>
    </subcellularLocation>
</comment>
<comment type="similarity">
    <text evidence="1">Belongs to the class-I aminoacyl-tRNA synthetase family. Glutamate--tRNA ligase type 1 subfamily.</text>
</comment>
<organism>
    <name type="scientific">Shewanella loihica (strain ATCC BAA-1088 / PV-4)</name>
    <dbReference type="NCBI Taxonomy" id="323850"/>
    <lineage>
        <taxon>Bacteria</taxon>
        <taxon>Pseudomonadati</taxon>
        <taxon>Pseudomonadota</taxon>
        <taxon>Gammaproteobacteria</taxon>
        <taxon>Alteromonadales</taxon>
        <taxon>Shewanellaceae</taxon>
        <taxon>Shewanella</taxon>
    </lineage>
</organism>
<keyword id="KW-0030">Aminoacyl-tRNA synthetase</keyword>
<keyword id="KW-0067">ATP-binding</keyword>
<keyword id="KW-0963">Cytoplasm</keyword>
<keyword id="KW-0436">Ligase</keyword>
<keyword id="KW-0479">Metal-binding</keyword>
<keyword id="KW-0547">Nucleotide-binding</keyword>
<keyword id="KW-0648">Protein biosynthesis</keyword>
<keyword id="KW-1185">Reference proteome</keyword>
<keyword id="KW-0862">Zinc</keyword>
<evidence type="ECO:0000255" key="1">
    <source>
        <dbReference type="HAMAP-Rule" id="MF_00022"/>
    </source>
</evidence>
<name>SYE_SHELP</name>
<reference key="1">
    <citation type="submission" date="2007-03" db="EMBL/GenBank/DDBJ databases">
        <title>Complete sequence of Shewanella loihica PV-4.</title>
        <authorList>
            <consortium name="US DOE Joint Genome Institute"/>
            <person name="Copeland A."/>
            <person name="Lucas S."/>
            <person name="Lapidus A."/>
            <person name="Barry K."/>
            <person name="Detter J.C."/>
            <person name="Glavina del Rio T."/>
            <person name="Hammon N."/>
            <person name="Israni S."/>
            <person name="Dalin E."/>
            <person name="Tice H."/>
            <person name="Pitluck S."/>
            <person name="Chain P."/>
            <person name="Malfatti S."/>
            <person name="Shin M."/>
            <person name="Vergez L."/>
            <person name="Schmutz J."/>
            <person name="Larimer F."/>
            <person name="Land M."/>
            <person name="Hauser L."/>
            <person name="Kyrpides N."/>
            <person name="Mikhailova N."/>
            <person name="Romine M.F."/>
            <person name="Serres G."/>
            <person name="Fredrickson J."/>
            <person name="Tiedje J."/>
            <person name="Richardson P."/>
        </authorList>
    </citation>
    <scope>NUCLEOTIDE SEQUENCE [LARGE SCALE GENOMIC DNA]</scope>
    <source>
        <strain>ATCC BAA-1088 / PV-4</strain>
    </source>
</reference>
<dbReference type="EC" id="6.1.1.17" evidence="1"/>
<dbReference type="EMBL" id="CP000606">
    <property type="protein sequence ID" value="ABO23316.1"/>
    <property type="molecule type" value="Genomic_DNA"/>
</dbReference>
<dbReference type="RefSeq" id="WP_011865248.1">
    <property type="nucleotide sequence ID" value="NC_009092.1"/>
</dbReference>
<dbReference type="SMR" id="A3QCW8"/>
<dbReference type="STRING" id="323850.Shew_1449"/>
<dbReference type="KEGG" id="slo:Shew_1449"/>
<dbReference type="eggNOG" id="COG0008">
    <property type="taxonomic scope" value="Bacteria"/>
</dbReference>
<dbReference type="HOGENOM" id="CLU_015768_6_3_6"/>
<dbReference type="OrthoDB" id="9807503at2"/>
<dbReference type="Proteomes" id="UP000001558">
    <property type="component" value="Chromosome"/>
</dbReference>
<dbReference type="GO" id="GO:0005829">
    <property type="term" value="C:cytosol"/>
    <property type="evidence" value="ECO:0007669"/>
    <property type="project" value="TreeGrafter"/>
</dbReference>
<dbReference type="GO" id="GO:0005524">
    <property type="term" value="F:ATP binding"/>
    <property type="evidence" value="ECO:0007669"/>
    <property type="project" value="UniProtKB-UniRule"/>
</dbReference>
<dbReference type="GO" id="GO:0004818">
    <property type="term" value="F:glutamate-tRNA ligase activity"/>
    <property type="evidence" value="ECO:0007669"/>
    <property type="project" value="UniProtKB-UniRule"/>
</dbReference>
<dbReference type="GO" id="GO:0000049">
    <property type="term" value="F:tRNA binding"/>
    <property type="evidence" value="ECO:0007669"/>
    <property type="project" value="InterPro"/>
</dbReference>
<dbReference type="GO" id="GO:0008270">
    <property type="term" value="F:zinc ion binding"/>
    <property type="evidence" value="ECO:0007669"/>
    <property type="project" value="UniProtKB-UniRule"/>
</dbReference>
<dbReference type="GO" id="GO:0006424">
    <property type="term" value="P:glutamyl-tRNA aminoacylation"/>
    <property type="evidence" value="ECO:0007669"/>
    <property type="project" value="UniProtKB-UniRule"/>
</dbReference>
<dbReference type="CDD" id="cd00808">
    <property type="entry name" value="GluRS_core"/>
    <property type="match status" value="1"/>
</dbReference>
<dbReference type="FunFam" id="3.40.50.620:FF:000007">
    <property type="entry name" value="Glutamate--tRNA ligase"/>
    <property type="match status" value="1"/>
</dbReference>
<dbReference type="Gene3D" id="1.10.10.350">
    <property type="match status" value="1"/>
</dbReference>
<dbReference type="Gene3D" id="3.40.50.620">
    <property type="entry name" value="HUPs"/>
    <property type="match status" value="1"/>
</dbReference>
<dbReference type="HAMAP" id="MF_00022">
    <property type="entry name" value="Glu_tRNA_synth_type1"/>
    <property type="match status" value="1"/>
</dbReference>
<dbReference type="InterPro" id="IPR045462">
    <property type="entry name" value="aa-tRNA-synth_I_cd-bd"/>
</dbReference>
<dbReference type="InterPro" id="IPR020751">
    <property type="entry name" value="aa-tRNA-synth_I_codon-bd_sub2"/>
</dbReference>
<dbReference type="InterPro" id="IPR001412">
    <property type="entry name" value="aa-tRNA-synth_I_CS"/>
</dbReference>
<dbReference type="InterPro" id="IPR008925">
    <property type="entry name" value="aa_tRNA-synth_I_cd-bd_sf"/>
</dbReference>
<dbReference type="InterPro" id="IPR004527">
    <property type="entry name" value="Glu-tRNA-ligase_bac/mito"/>
</dbReference>
<dbReference type="InterPro" id="IPR000924">
    <property type="entry name" value="Glu/Gln-tRNA-synth"/>
</dbReference>
<dbReference type="InterPro" id="IPR020058">
    <property type="entry name" value="Glu/Gln-tRNA-synth_Ib_cat-dom"/>
</dbReference>
<dbReference type="InterPro" id="IPR049940">
    <property type="entry name" value="GluQ/Sye"/>
</dbReference>
<dbReference type="InterPro" id="IPR033910">
    <property type="entry name" value="GluRS_core"/>
</dbReference>
<dbReference type="InterPro" id="IPR014729">
    <property type="entry name" value="Rossmann-like_a/b/a_fold"/>
</dbReference>
<dbReference type="NCBIfam" id="TIGR00464">
    <property type="entry name" value="gltX_bact"/>
    <property type="match status" value="1"/>
</dbReference>
<dbReference type="NCBIfam" id="NF004314">
    <property type="entry name" value="PRK05710.1-3"/>
    <property type="match status" value="1"/>
</dbReference>
<dbReference type="PANTHER" id="PTHR43311">
    <property type="entry name" value="GLUTAMATE--TRNA LIGASE"/>
    <property type="match status" value="1"/>
</dbReference>
<dbReference type="PANTHER" id="PTHR43311:SF2">
    <property type="entry name" value="GLUTAMATE--TRNA LIGASE, MITOCHONDRIAL-RELATED"/>
    <property type="match status" value="1"/>
</dbReference>
<dbReference type="Pfam" id="PF19269">
    <property type="entry name" value="Anticodon_2"/>
    <property type="match status" value="1"/>
</dbReference>
<dbReference type="Pfam" id="PF00749">
    <property type="entry name" value="tRNA-synt_1c"/>
    <property type="match status" value="1"/>
</dbReference>
<dbReference type="PRINTS" id="PR00987">
    <property type="entry name" value="TRNASYNTHGLU"/>
</dbReference>
<dbReference type="SUPFAM" id="SSF48163">
    <property type="entry name" value="An anticodon-binding domain of class I aminoacyl-tRNA synthetases"/>
    <property type="match status" value="1"/>
</dbReference>
<dbReference type="SUPFAM" id="SSF52374">
    <property type="entry name" value="Nucleotidylyl transferase"/>
    <property type="match status" value="1"/>
</dbReference>
<dbReference type="PROSITE" id="PS00178">
    <property type="entry name" value="AA_TRNA_LIGASE_I"/>
    <property type="match status" value="1"/>
</dbReference>
<gene>
    <name evidence="1" type="primary">gltX</name>
    <name type="ordered locus">Shew_1449</name>
</gene>